<keyword id="KW-0963">Cytoplasm</keyword>
<keyword id="KW-0256">Endoplasmic reticulum</keyword>
<keyword id="KW-0472">Membrane</keyword>
<keyword id="KW-0509">mRNA transport</keyword>
<keyword id="KW-0539">Nucleus</keyword>
<keyword id="KW-0653">Protein transport</keyword>
<keyword id="KW-1185">Reference proteome</keyword>
<keyword id="KW-0811">Translocation</keyword>
<keyword id="KW-0813">Transport</keyword>
<name>NPL4_LODEL</name>
<accession>A5DX93</accession>
<sequence>MSLILRFRSKDGMFRVNTDSSSTFQTVVDQLSLKLPTTDYDQITVSDKPNNKNDLGSQAKTLLSILHQTISELQLKNGDLLFLNYSNAIPQGTLASTSSTKLQSGSIAINSSGGSSGPATASGANASTIRVSPTTHGPVKVSQLPIDDELDSQDGILSRPISSMCRHGAKGMCEYCSPLPPWDENYRKEHAIKHISYHAYLKQQMAKFNKKELSSSYIAPLENPNYAINLNCNEGHQSYPRGICSKCQPLPITLQLQKFRMVDHLEYASHTILNDFINVWRSTGVQRFGYLYGRYEKFDKVPMGIKAVVEAIYEPPQHDELDGLTLLDWEDEPIVDAIAAKLGLQKVGIVFTDLTDSGNRDGTVLCKRHKDSYFLTNLEIIMAAKFQIKNPNITKYANLGEFSSKFVTCVISGGLQGEIEPRSYQVSSSAEGLVKADIITGSTQPSQIYVNGNNDTRYVPDIQYSKINEYGLEVKSNAKPTFPGEFLLVSLTDSFPIDPKPLFTSKISYVIENREFLGHGDIDGLDHLQNLSSVAKFIKLNDSELFDFHWLVHVAKMGILSEEELSLLCKYVKEKKYDDYLQLMESGGWMTFLTILEQST</sequence>
<dbReference type="EMBL" id="CH981525">
    <property type="protein sequence ID" value="EDK43801.1"/>
    <property type="molecule type" value="Genomic_DNA"/>
</dbReference>
<dbReference type="RefSeq" id="XP_001527151.1">
    <property type="nucleotide sequence ID" value="XM_001527101.1"/>
</dbReference>
<dbReference type="SMR" id="A5DX93"/>
<dbReference type="FunCoup" id="A5DX93">
    <property type="interactions" value="909"/>
</dbReference>
<dbReference type="STRING" id="379508.A5DX93"/>
<dbReference type="GeneID" id="5233850"/>
<dbReference type="KEGG" id="lel:PVL30_001949"/>
<dbReference type="VEuPathDB" id="FungiDB:LELG_01980"/>
<dbReference type="eggNOG" id="KOG2834">
    <property type="taxonomic scope" value="Eukaryota"/>
</dbReference>
<dbReference type="HOGENOM" id="CLU_017172_0_0_1"/>
<dbReference type="InParanoid" id="A5DX93"/>
<dbReference type="OMA" id="KWSRTGR"/>
<dbReference type="OrthoDB" id="10251089at2759"/>
<dbReference type="Proteomes" id="UP000001996">
    <property type="component" value="Unassembled WGS sequence"/>
</dbReference>
<dbReference type="GO" id="GO:0036266">
    <property type="term" value="C:Cdc48p-Npl4p-Vms1p AAA ATPase complex"/>
    <property type="evidence" value="ECO:0007669"/>
    <property type="project" value="EnsemblFungi"/>
</dbReference>
<dbReference type="GO" id="GO:0000837">
    <property type="term" value="C:Doa10p ubiquitin ligase complex"/>
    <property type="evidence" value="ECO:0007669"/>
    <property type="project" value="EnsemblFungi"/>
</dbReference>
<dbReference type="GO" id="GO:0000839">
    <property type="term" value="C:Hrd1p ubiquitin ligase ERAD-L complex"/>
    <property type="evidence" value="ECO:0007669"/>
    <property type="project" value="EnsemblFungi"/>
</dbReference>
<dbReference type="GO" id="GO:0031965">
    <property type="term" value="C:nuclear membrane"/>
    <property type="evidence" value="ECO:0007669"/>
    <property type="project" value="UniProtKB-SubCell"/>
</dbReference>
<dbReference type="GO" id="GO:0048471">
    <property type="term" value="C:perinuclear region of cytoplasm"/>
    <property type="evidence" value="ECO:0007669"/>
    <property type="project" value="UniProtKB-SubCell"/>
</dbReference>
<dbReference type="GO" id="GO:0030894">
    <property type="term" value="C:replisome"/>
    <property type="evidence" value="ECO:0007669"/>
    <property type="project" value="EnsemblFungi"/>
</dbReference>
<dbReference type="GO" id="GO:1990112">
    <property type="term" value="C:RQC complex"/>
    <property type="evidence" value="ECO:0007669"/>
    <property type="project" value="EnsemblFungi"/>
</dbReference>
<dbReference type="GO" id="GO:0034098">
    <property type="term" value="C:VCP-NPL4-UFD1 AAA ATPase complex"/>
    <property type="evidence" value="ECO:0007669"/>
    <property type="project" value="EnsemblFungi"/>
</dbReference>
<dbReference type="GO" id="GO:0036435">
    <property type="term" value="F:K48-linked polyubiquitin modification-dependent protein binding"/>
    <property type="evidence" value="ECO:0007669"/>
    <property type="project" value="EnsemblFungi"/>
</dbReference>
<dbReference type="GO" id="GO:0043130">
    <property type="term" value="F:ubiquitin binding"/>
    <property type="evidence" value="ECO:0007669"/>
    <property type="project" value="TreeGrafter"/>
</dbReference>
<dbReference type="GO" id="GO:0031625">
    <property type="term" value="F:ubiquitin protein ligase binding"/>
    <property type="evidence" value="ECO:0007669"/>
    <property type="project" value="TreeGrafter"/>
</dbReference>
<dbReference type="GO" id="GO:0071629">
    <property type="term" value="P:cytoplasm protein quality control by the ubiquitin-proteasome system"/>
    <property type="evidence" value="ECO:0007669"/>
    <property type="project" value="EnsemblFungi"/>
</dbReference>
<dbReference type="GO" id="GO:0006274">
    <property type="term" value="P:DNA replication termination"/>
    <property type="evidence" value="ECO:0007669"/>
    <property type="project" value="EnsemblFungi"/>
</dbReference>
<dbReference type="GO" id="GO:0099638">
    <property type="term" value="P:endosome to plasma membrane protein transport"/>
    <property type="evidence" value="ECO:0007669"/>
    <property type="project" value="EnsemblFungi"/>
</dbReference>
<dbReference type="GO" id="GO:0072671">
    <property type="term" value="P:mitochondria-associated ubiquitin-dependent protein catabolic process"/>
    <property type="evidence" value="ECO:0007669"/>
    <property type="project" value="EnsemblFungi"/>
</dbReference>
<dbReference type="GO" id="GO:0051228">
    <property type="term" value="P:mitotic spindle disassembly"/>
    <property type="evidence" value="ECO:0007669"/>
    <property type="project" value="EnsemblFungi"/>
</dbReference>
<dbReference type="GO" id="GO:0051028">
    <property type="term" value="P:mRNA transport"/>
    <property type="evidence" value="ECO:0007669"/>
    <property type="project" value="UniProtKB-KW"/>
</dbReference>
<dbReference type="GO" id="GO:0070651">
    <property type="term" value="P:nonfunctional rRNA decay"/>
    <property type="evidence" value="ECO:0007669"/>
    <property type="project" value="EnsemblFungi"/>
</dbReference>
<dbReference type="GO" id="GO:1900182">
    <property type="term" value="P:positive regulation of protein localization to nucleus"/>
    <property type="evidence" value="ECO:0007669"/>
    <property type="project" value="EnsemblFungi"/>
</dbReference>
<dbReference type="GO" id="GO:0072665">
    <property type="term" value="P:protein localization to vacuole"/>
    <property type="evidence" value="ECO:0007669"/>
    <property type="project" value="EnsemblFungi"/>
</dbReference>
<dbReference type="GO" id="GO:0030970">
    <property type="term" value="P:retrograde protein transport, ER to cytosol"/>
    <property type="evidence" value="ECO:0007669"/>
    <property type="project" value="EnsemblFungi"/>
</dbReference>
<dbReference type="GO" id="GO:1990116">
    <property type="term" value="P:ribosome-associated ubiquitin-dependent protein catabolic process"/>
    <property type="evidence" value="ECO:0007669"/>
    <property type="project" value="EnsemblFungi"/>
</dbReference>
<dbReference type="CDD" id="cd08061">
    <property type="entry name" value="MPN_NPL4"/>
    <property type="match status" value="1"/>
</dbReference>
<dbReference type="Gene3D" id="3.10.20.90">
    <property type="entry name" value="Phosphatidylinositol 3-kinase Catalytic Subunit, Chain A, domain 1"/>
    <property type="match status" value="1"/>
</dbReference>
<dbReference type="InterPro" id="IPR037518">
    <property type="entry name" value="MPN"/>
</dbReference>
<dbReference type="InterPro" id="IPR016563">
    <property type="entry name" value="Npl4"/>
</dbReference>
<dbReference type="InterPro" id="IPR007717">
    <property type="entry name" value="NPL4_C"/>
</dbReference>
<dbReference type="InterPro" id="IPR024682">
    <property type="entry name" value="Npl4_Ub-like_dom"/>
</dbReference>
<dbReference type="InterPro" id="IPR007716">
    <property type="entry name" value="NPL4_Zn-bd_put"/>
</dbReference>
<dbReference type="PANTHER" id="PTHR12710">
    <property type="entry name" value="NUCLEAR PROTEIN LOCALIZATION 4"/>
    <property type="match status" value="1"/>
</dbReference>
<dbReference type="PANTHER" id="PTHR12710:SF0">
    <property type="entry name" value="NUCLEAR PROTEIN LOCALIZATION PROTEIN 4 HOMOLOG"/>
    <property type="match status" value="1"/>
</dbReference>
<dbReference type="Pfam" id="PF05021">
    <property type="entry name" value="NPL4"/>
    <property type="match status" value="1"/>
</dbReference>
<dbReference type="Pfam" id="PF11543">
    <property type="entry name" value="UN_NPL4"/>
    <property type="match status" value="1"/>
</dbReference>
<dbReference type="Pfam" id="PF05020">
    <property type="entry name" value="zf-NPL4"/>
    <property type="match status" value="1"/>
</dbReference>
<dbReference type="PIRSF" id="PIRSF010052">
    <property type="entry name" value="Polyub_prc_Npl4"/>
    <property type="match status" value="1"/>
</dbReference>
<dbReference type="PROSITE" id="PS50249">
    <property type="entry name" value="MPN"/>
    <property type="match status" value="1"/>
</dbReference>
<protein>
    <recommendedName>
        <fullName>Nuclear protein localization protein 4</fullName>
    </recommendedName>
</protein>
<reference key="1">
    <citation type="journal article" date="2009" name="Nature">
        <title>Evolution of pathogenicity and sexual reproduction in eight Candida genomes.</title>
        <authorList>
            <person name="Butler G."/>
            <person name="Rasmussen M.D."/>
            <person name="Lin M.F."/>
            <person name="Santos M.A.S."/>
            <person name="Sakthikumar S."/>
            <person name="Munro C.A."/>
            <person name="Rheinbay E."/>
            <person name="Grabherr M."/>
            <person name="Forche A."/>
            <person name="Reedy J.L."/>
            <person name="Agrafioti I."/>
            <person name="Arnaud M.B."/>
            <person name="Bates S."/>
            <person name="Brown A.J.P."/>
            <person name="Brunke S."/>
            <person name="Costanzo M.C."/>
            <person name="Fitzpatrick D.A."/>
            <person name="de Groot P.W.J."/>
            <person name="Harris D."/>
            <person name="Hoyer L.L."/>
            <person name="Hube B."/>
            <person name="Klis F.M."/>
            <person name="Kodira C."/>
            <person name="Lennard N."/>
            <person name="Logue M.E."/>
            <person name="Martin R."/>
            <person name="Neiman A.M."/>
            <person name="Nikolaou E."/>
            <person name="Quail M.A."/>
            <person name="Quinn J."/>
            <person name="Santos M.C."/>
            <person name="Schmitzberger F.F."/>
            <person name="Sherlock G."/>
            <person name="Shah P."/>
            <person name="Silverstein K.A.T."/>
            <person name="Skrzypek M.S."/>
            <person name="Soll D."/>
            <person name="Staggs R."/>
            <person name="Stansfield I."/>
            <person name="Stumpf M.P.H."/>
            <person name="Sudbery P.E."/>
            <person name="Srikantha T."/>
            <person name="Zeng Q."/>
            <person name="Berman J."/>
            <person name="Berriman M."/>
            <person name="Heitman J."/>
            <person name="Gow N.A.R."/>
            <person name="Lorenz M.C."/>
            <person name="Birren B.W."/>
            <person name="Kellis M."/>
            <person name="Cuomo C.A."/>
        </authorList>
    </citation>
    <scope>NUCLEOTIDE SEQUENCE [LARGE SCALE GENOMIC DNA]</scope>
    <source>
        <strain>ATCC 11503 / BCRC 21390 / CBS 2605 / JCM 1781 / NBRC 1676 / NRRL YB-4239</strain>
    </source>
</reference>
<proteinExistence type="inferred from homology"/>
<evidence type="ECO:0000250" key="1"/>
<evidence type="ECO:0000255" key="2">
    <source>
        <dbReference type="PROSITE-ProRule" id="PRU01182"/>
    </source>
</evidence>
<evidence type="ECO:0000256" key="3">
    <source>
        <dbReference type="SAM" id="MobiDB-lite"/>
    </source>
</evidence>
<evidence type="ECO:0000305" key="4"/>
<feature type="chain" id="PRO_0000339447" description="Nuclear protein localization protein 4">
    <location>
        <begin position="1"/>
        <end position="600"/>
    </location>
</feature>
<feature type="domain" description="MPN" evidence="2">
    <location>
        <begin position="265"/>
        <end position="402"/>
    </location>
</feature>
<feature type="region of interest" description="Disordered" evidence="3">
    <location>
        <begin position="109"/>
        <end position="140"/>
    </location>
</feature>
<feature type="compositionally biased region" description="Low complexity" evidence="3">
    <location>
        <begin position="109"/>
        <end position="128"/>
    </location>
</feature>
<comment type="function">
    <text evidence="1">Involved in the import of nuclear-targeted proteins into the nucleus and the export of poly(A) RNA out of the nucleus. Has a role in the endoplasmic reticulum-associated degradation (ERAD) pathway (By similarity).</text>
</comment>
<comment type="subcellular location">
    <subcellularLocation>
        <location evidence="1">Cytoplasm</location>
        <location evidence="1">Perinuclear region</location>
    </subcellularLocation>
    <subcellularLocation>
        <location evidence="1">Endoplasmic reticulum membrane</location>
        <topology evidence="1">Peripheral membrane protein</topology>
        <orientation evidence="1">Cytoplasmic side</orientation>
    </subcellularLocation>
    <subcellularLocation>
        <location evidence="1">Nucleus membrane</location>
        <topology evidence="1">Peripheral membrane protein</topology>
        <orientation evidence="1">Cytoplasmic side</orientation>
    </subcellularLocation>
    <text evidence="1">Localizes mainly at the nuclear periphery and the endoplasmic reticulum membrane.</text>
</comment>
<comment type="similarity">
    <text evidence="4">Belongs to the NPL4 family.</text>
</comment>
<gene>
    <name type="primary">NPL4</name>
    <name type="ORF">LELG_01980</name>
</gene>
<organism>
    <name type="scientific">Lodderomyces elongisporus (strain ATCC 11503 / CBS 2605 / JCM 1781 / NBRC 1676 / NRRL YB-4239)</name>
    <name type="common">Yeast</name>
    <name type="synonym">Saccharomyces elongisporus</name>
    <dbReference type="NCBI Taxonomy" id="379508"/>
    <lineage>
        <taxon>Eukaryota</taxon>
        <taxon>Fungi</taxon>
        <taxon>Dikarya</taxon>
        <taxon>Ascomycota</taxon>
        <taxon>Saccharomycotina</taxon>
        <taxon>Pichiomycetes</taxon>
        <taxon>Debaryomycetaceae</taxon>
        <taxon>Candida/Lodderomyces clade</taxon>
        <taxon>Lodderomyces</taxon>
    </lineage>
</organism>